<evidence type="ECO:0000250" key="1">
    <source>
        <dbReference type="UniProtKB" id="A9JX06"/>
    </source>
</evidence>
<evidence type="ECO:0000305" key="2"/>
<protein>
    <recommendedName>
        <fullName>Phenol-soluble modulin alpha 2 peptide</fullName>
    </recommendedName>
</protein>
<proteinExistence type="inferred from homology"/>
<sequence>MGIIAGIIKFIKGLIEKFTGK</sequence>
<dbReference type="EMBL" id="BA000018">
    <property type="status" value="NOT_ANNOTATED_CDS"/>
    <property type="molecule type" value="Genomic_DNA"/>
</dbReference>
<dbReference type="GO" id="GO:0031640">
    <property type="term" value="P:killing of cells of another organism"/>
    <property type="evidence" value="ECO:0007669"/>
    <property type="project" value="UniProtKB-KW"/>
</dbReference>
<dbReference type="InterPro" id="IPR031429">
    <property type="entry name" value="PSM_alpha"/>
</dbReference>
<dbReference type="NCBIfam" id="NF033425">
    <property type="entry name" value="PSM_alpha_1_2"/>
    <property type="match status" value="1"/>
</dbReference>
<dbReference type="Pfam" id="PF17063">
    <property type="entry name" value="PSMalpha"/>
    <property type="match status" value="1"/>
</dbReference>
<gene>
    <name type="primary">psmA2</name>
    <name type="ordered locus">SA0410.4</name>
</gene>
<comment type="function">
    <text evidence="1">Peptide which can recruit, activate and subsequently lyse human neutrophils, thus eliminating the main cellular defense against infection.</text>
</comment>
<comment type="similarity">
    <text evidence="2">Belongs to the phenol-soluble modulin alpha peptides family.</text>
</comment>
<reference key="1">
    <citation type="journal article" date="2001" name="Lancet">
        <title>Whole genome sequencing of meticillin-resistant Staphylococcus aureus.</title>
        <authorList>
            <person name="Kuroda M."/>
            <person name="Ohta T."/>
            <person name="Uchiyama I."/>
            <person name="Baba T."/>
            <person name="Yuzawa H."/>
            <person name="Kobayashi I."/>
            <person name="Cui L."/>
            <person name="Oguchi A."/>
            <person name="Aoki K."/>
            <person name="Nagai Y."/>
            <person name="Lian J.-Q."/>
            <person name="Ito T."/>
            <person name="Kanamori M."/>
            <person name="Matsumaru H."/>
            <person name="Maruyama A."/>
            <person name="Murakami H."/>
            <person name="Hosoyama A."/>
            <person name="Mizutani-Ui Y."/>
            <person name="Takahashi N.K."/>
            <person name="Sawano T."/>
            <person name="Inoue R."/>
            <person name="Kaito C."/>
            <person name="Sekimizu K."/>
            <person name="Hirakawa H."/>
            <person name="Kuhara S."/>
            <person name="Goto S."/>
            <person name="Yabuzaki J."/>
            <person name="Kanehisa M."/>
            <person name="Yamashita A."/>
            <person name="Oshima K."/>
            <person name="Furuya K."/>
            <person name="Yoshino C."/>
            <person name="Shiba T."/>
            <person name="Hattori M."/>
            <person name="Ogasawara N."/>
            <person name="Hayashi H."/>
            <person name="Hiramatsu K."/>
        </authorList>
    </citation>
    <scope>NUCLEOTIDE SEQUENCE [LARGE SCALE GENOMIC DNA]</scope>
    <source>
        <strain>N315</strain>
    </source>
</reference>
<name>PSMA2_STAAN</name>
<keyword id="KW-0204">Cytolysis</keyword>
<keyword id="KW-0843">Virulence</keyword>
<accession>P0C7Z9</accession>
<organism>
    <name type="scientific">Staphylococcus aureus (strain N315)</name>
    <dbReference type="NCBI Taxonomy" id="158879"/>
    <lineage>
        <taxon>Bacteria</taxon>
        <taxon>Bacillati</taxon>
        <taxon>Bacillota</taxon>
        <taxon>Bacilli</taxon>
        <taxon>Bacillales</taxon>
        <taxon>Staphylococcaceae</taxon>
        <taxon>Staphylococcus</taxon>
    </lineage>
</organism>
<feature type="peptide" id="PRO_0000345052" description="Phenol-soluble modulin alpha 2 peptide">
    <location>
        <begin position="1"/>
        <end position="21"/>
    </location>
</feature>